<comment type="catalytic activity">
    <reaction>
        <text>a 2,3-saturated acyl-CoA + O2 = a (2E)-enoyl-CoA + H2O2</text>
        <dbReference type="Rhea" id="RHEA:38959"/>
        <dbReference type="ChEBI" id="CHEBI:15379"/>
        <dbReference type="ChEBI" id="CHEBI:16240"/>
        <dbReference type="ChEBI" id="CHEBI:58856"/>
        <dbReference type="ChEBI" id="CHEBI:65111"/>
        <dbReference type="EC" id="1.3.3.6"/>
    </reaction>
</comment>
<comment type="similarity">
    <text evidence="2">Belongs to the acyl-CoA oxidase family.</text>
</comment>
<comment type="sequence caution" evidence="2">
    <conflict type="erroneous gene model prediction">
        <sequence resource="EMBL-CDS" id="AAF63829"/>
    </conflict>
</comment>
<comment type="sequence caution" evidence="2">
    <conflict type="erroneous gene model prediction">
        <sequence resource="EMBL-CDS" id="AAG50996"/>
    </conflict>
</comment>
<keyword id="KW-0276">Fatty acid metabolism</keyword>
<keyword id="KW-0443">Lipid metabolism</keyword>
<keyword id="KW-0560">Oxidoreductase</keyword>
<keyword id="KW-1185">Reference proteome</keyword>
<dbReference type="EC" id="1.3.3.6"/>
<dbReference type="EMBL" id="AC023912">
    <property type="protein sequence ID" value="AAF63829.1"/>
    <property type="status" value="ALT_SEQ"/>
    <property type="molecule type" value="Genomic_DNA"/>
</dbReference>
<dbReference type="EMBL" id="AC036106">
    <property type="protein sequence ID" value="AAG50996.1"/>
    <property type="status" value="ALT_SEQ"/>
    <property type="molecule type" value="Genomic_DNA"/>
</dbReference>
<dbReference type="EMBL" id="CP002686">
    <property type="protein sequence ID" value="AEE74442.1"/>
    <property type="molecule type" value="Genomic_DNA"/>
</dbReference>
<dbReference type="RefSeq" id="NP_187325.4">
    <property type="nucleotide sequence ID" value="NM_111549.4"/>
</dbReference>
<dbReference type="SMR" id="P0CZ24"/>
<dbReference type="FunCoup" id="P0CZ24">
    <property type="interactions" value="390"/>
</dbReference>
<dbReference type="STRING" id="3702.P0CZ24"/>
<dbReference type="PaxDb" id="3702-AT3G06690.1"/>
<dbReference type="EnsemblPlants" id="AT3G06690.1">
    <property type="protein sequence ID" value="AT3G06690.1"/>
    <property type="gene ID" value="AT3G06690"/>
</dbReference>
<dbReference type="GeneID" id="819854"/>
<dbReference type="Gramene" id="AT3G06690.1">
    <property type="protein sequence ID" value="AT3G06690.1"/>
    <property type="gene ID" value="AT3G06690"/>
</dbReference>
<dbReference type="KEGG" id="ath:AT3G06690"/>
<dbReference type="Araport" id="AT3G06690"/>
<dbReference type="TAIR" id="AT3G06690"/>
<dbReference type="eggNOG" id="KOG0135">
    <property type="taxonomic scope" value="Eukaryota"/>
</dbReference>
<dbReference type="HOGENOM" id="CLU_1672332_0_0_1"/>
<dbReference type="InParanoid" id="P0CZ24"/>
<dbReference type="OMA" id="FHLRERN"/>
<dbReference type="PhylomeDB" id="P0CZ24"/>
<dbReference type="PRO" id="PR:P0CZ24"/>
<dbReference type="Proteomes" id="UP000006548">
    <property type="component" value="Chromosome 3"/>
</dbReference>
<dbReference type="ExpressionAtlas" id="P0CZ24">
    <property type="expression patterns" value="baseline and differential"/>
</dbReference>
<dbReference type="GO" id="GO:0005829">
    <property type="term" value="C:cytosol"/>
    <property type="evidence" value="ECO:0007005"/>
    <property type="project" value="TAIR"/>
</dbReference>
<dbReference type="GO" id="GO:0005777">
    <property type="term" value="C:peroxisome"/>
    <property type="evidence" value="ECO:0007669"/>
    <property type="project" value="InterPro"/>
</dbReference>
<dbReference type="GO" id="GO:0003997">
    <property type="term" value="F:acyl-CoA oxidase activity"/>
    <property type="evidence" value="ECO:0007669"/>
    <property type="project" value="UniProtKB-EC"/>
</dbReference>
<dbReference type="GO" id="GO:0071949">
    <property type="term" value="F:FAD binding"/>
    <property type="evidence" value="ECO:0007669"/>
    <property type="project" value="InterPro"/>
</dbReference>
<dbReference type="GO" id="GO:0006635">
    <property type="term" value="P:fatty acid beta-oxidation"/>
    <property type="evidence" value="ECO:0007669"/>
    <property type="project" value="InterPro"/>
</dbReference>
<dbReference type="FunFam" id="1.20.140.10:FF:000007">
    <property type="entry name" value="Acyl-coenzyme A oxidase"/>
    <property type="match status" value="1"/>
</dbReference>
<dbReference type="Gene3D" id="1.20.140.10">
    <property type="entry name" value="Butyryl-CoA Dehydrogenase, subunit A, domain 3"/>
    <property type="match status" value="1"/>
</dbReference>
<dbReference type="InterPro" id="IPR012258">
    <property type="entry name" value="Acyl-CoA_oxidase"/>
</dbReference>
<dbReference type="InterPro" id="IPR002655">
    <property type="entry name" value="Acyl-CoA_oxidase_C"/>
</dbReference>
<dbReference type="InterPro" id="IPR036250">
    <property type="entry name" value="AcylCo_DH-like_C"/>
</dbReference>
<dbReference type="PANTHER" id="PTHR10909:SF352">
    <property type="entry name" value="ACYL-COENZYME A OXIDASE-LIKE PROTEIN"/>
    <property type="match status" value="1"/>
</dbReference>
<dbReference type="PANTHER" id="PTHR10909">
    <property type="entry name" value="ELECTRON TRANSPORT OXIDOREDUCTASE"/>
    <property type="match status" value="1"/>
</dbReference>
<dbReference type="Pfam" id="PF01756">
    <property type="entry name" value="ACOX"/>
    <property type="match status" value="1"/>
</dbReference>
<dbReference type="SUPFAM" id="SSF47203">
    <property type="entry name" value="Acyl-CoA dehydrogenase C-terminal domain-like"/>
    <property type="match status" value="1"/>
</dbReference>
<name>Y3669_ARATH</name>
<organism>
    <name type="scientific">Arabidopsis thaliana</name>
    <name type="common">Mouse-ear cress</name>
    <dbReference type="NCBI Taxonomy" id="3702"/>
    <lineage>
        <taxon>Eukaryota</taxon>
        <taxon>Viridiplantae</taxon>
        <taxon>Streptophyta</taxon>
        <taxon>Embryophyta</taxon>
        <taxon>Tracheophyta</taxon>
        <taxon>Spermatophyta</taxon>
        <taxon>Magnoliopsida</taxon>
        <taxon>eudicotyledons</taxon>
        <taxon>Gunneridae</taxon>
        <taxon>Pentapetalae</taxon>
        <taxon>rosids</taxon>
        <taxon>malvids</taxon>
        <taxon>Brassicales</taxon>
        <taxon>Brassicaceae</taxon>
        <taxon>Camelineae</taxon>
        <taxon>Arabidopsis</taxon>
    </lineage>
</organism>
<reference key="1">
    <citation type="journal article" date="2000" name="Nature">
        <title>Sequence and analysis of chromosome 3 of the plant Arabidopsis thaliana.</title>
        <authorList>
            <person name="Salanoubat M."/>
            <person name="Lemcke K."/>
            <person name="Rieger M."/>
            <person name="Ansorge W."/>
            <person name="Unseld M."/>
            <person name="Fartmann B."/>
            <person name="Valle G."/>
            <person name="Bloecker H."/>
            <person name="Perez-Alonso M."/>
            <person name="Obermaier B."/>
            <person name="Delseny M."/>
            <person name="Boutry M."/>
            <person name="Grivell L.A."/>
            <person name="Mache R."/>
            <person name="Puigdomenech P."/>
            <person name="De Simone V."/>
            <person name="Choisne N."/>
            <person name="Artiguenave F."/>
            <person name="Robert C."/>
            <person name="Brottier P."/>
            <person name="Wincker P."/>
            <person name="Cattolico L."/>
            <person name="Weissenbach J."/>
            <person name="Saurin W."/>
            <person name="Quetier F."/>
            <person name="Schaefer M."/>
            <person name="Mueller-Auer S."/>
            <person name="Gabel C."/>
            <person name="Fuchs M."/>
            <person name="Benes V."/>
            <person name="Wurmbach E."/>
            <person name="Drzonek H."/>
            <person name="Erfle H."/>
            <person name="Jordan N."/>
            <person name="Bangert S."/>
            <person name="Wiedelmann R."/>
            <person name="Kranz H."/>
            <person name="Voss H."/>
            <person name="Holland R."/>
            <person name="Brandt P."/>
            <person name="Nyakatura G."/>
            <person name="Vezzi A."/>
            <person name="D'Angelo M."/>
            <person name="Pallavicini A."/>
            <person name="Toppo S."/>
            <person name="Simionati B."/>
            <person name="Conrad A."/>
            <person name="Hornischer K."/>
            <person name="Kauer G."/>
            <person name="Loehnert T.-H."/>
            <person name="Nordsiek G."/>
            <person name="Reichelt J."/>
            <person name="Scharfe M."/>
            <person name="Schoen O."/>
            <person name="Bargues M."/>
            <person name="Terol J."/>
            <person name="Climent J."/>
            <person name="Navarro P."/>
            <person name="Collado C."/>
            <person name="Perez-Perez A."/>
            <person name="Ottenwaelder B."/>
            <person name="Duchemin D."/>
            <person name="Cooke R."/>
            <person name="Laudie M."/>
            <person name="Berger-Llauro C."/>
            <person name="Purnelle B."/>
            <person name="Masuy D."/>
            <person name="de Haan M."/>
            <person name="Maarse A.C."/>
            <person name="Alcaraz J.-P."/>
            <person name="Cottet A."/>
            <person name="Casacuberta E."/>
            <person name="Monfort A."/>
            <person name="Argiriou A."/>
            <person name="Flores M."/>
            <person name="Liguori R."/>
            <person name="Vitale D."/>
            <person name="Mannhaupt G."/>
            <person name="Haase D."/>
            <person name="Schoof H."/>
            <person name="Rudd S."/>
            <person name="Zaccaria P."/>
            <person name="Mewes H.-W."/>
            <person name="Mayer K.F.X."/>
            <person name="Kaul S."/>
            <person name="Town C.D."/>
            <person name="Koo H.L."/>
            <person name="Tallon L.J."/>
            <person name="Jenkins J."/>
            <person name="Rooney T."/>
            <person name="Rizzo M."/>
            <person name="Walts A."/>
            <person name="Utterback T."/>
            <person name="Fujii C.Y."/>
            <person name="Shea T.P."/>
            <person name="Creasy T.H."/>
            <person name="Haas B."/>
            <person name="Maiti R."/>
            <person name="Wu D."/>
            <person name="Peterson J."/>
            <person name="Van Aken S."/>
            <person name="Pai G."/>
            <person name="Militscher J."/>
            <person name="Sellers P."/>
            <person name="Gill J.E."/>
            <person name="Feldblyum T.V."/>
            <person name="Preuss D."/>
            <person name="Lin X."/>
            <person name="Nierman W.C."/>
            <person name="Salzberg S.L."/>
            <person name="White O."/>
            <person name="Venter J.C."/>
            <person name="Fraser C.M."/>
            <person name="Kaneko T."/>
            <person name="Nakamura Y."/>
            <person name="Sato S."/>
            <person name="Kato T."/>
            <person name="Asamizu E."/>
            <person name="Sasamoto S."/>
            <person name="Kimura T."/>
            <person name="Idesawa K."/>
            <person name="Kawashima K."/>
            <person name="Kishida Y."/>
            <person name="Kiyokawa C."/>
            <person name="Kohara M."/>
            <person name="Matsumoto M."/>
            <person name="Matsuno A."/>
            <person name="Muraki A."/>
            <person name="Nakayama S."/>
            <person name="Nakazaki N."/>
            <person name="Shinpo S."/>
            <person name="Takeuchi C."/>
            <person name="Wada T."/>
            <person name="Watanabe A."/>
            <person name="Yamada M."/>
            <person name="Yasuda M."/>
            <person name="Tabata S."/>
        </authorList>
    </citation>
    <scope>NUCLEOTIDE SEQUENCE [LARGE SCALE GENOMIC DNA]</scope>
    <source>
        <strain>cv. Columbia</strain>
    </source>
</reference>
<reference key="2">
    <citation type="journal article" date="2017" name="Plant J.">
        <title>Araport11: a complete reannotation of the Arabidopsis thaliana reference genome.</title>
        <authorList>
            <person name="Cheng C.Y."/>
            <person name="Krishnakumar V."/>
            <person name="Chan A.P."/>
            <person name="Thibaud-Nissen F."/>
            <person name="Schobel S."/>
            <person name="Town C.D."/>
        </authorList>
    </citation>
    <scope>GENOME REANNOTATION</scope>
    <source>
        <strain>cv. Columbia</strain>
    </source>
</reference>
<evidence type="ECO:0000256" key="1">
    <source>
        <dbReference type="SAM" id="MobiDB-lite"/>
    </source>
</evidence>
<evidence type="ECO:0000305" key="2"/>
<gene>
    <name type="ordered locus">At3g06690</name>
    <name type="ORF">F3E22.17</name>
    <name type="ORF">T8E24.15</name>
</gene>
<accession>P0CZ24</accession>
<accession>F4JC35</accession>
<accession>Q9C839</accession>
<accession>Q9LKX5</accession>
<accession>Q9LLH9</accession>
<accession>Q9LMI8</accession>
<accession>Q9M7X6</accession>
<sequence length="187" mass="21037">MTKEPIYSPRMLHRDPDSPRPVLPTQLTSSTLRCSQFQTNVFCLRERDLLERFTSEVAQLQGRGESREFSFLLSHQLAEDLGKAFTEKAMLQTILDAEAKLPTGSVKDVLGLVRSMYALISLEEDPSLLRYGYLSQDNVGDVRREVSKLCGELRPHALALVTSFGIPDSFLSPIAFNWVEANTWSSV</sequence>
<protein>
    <recommendedName>
        <fullName>Putative acyl-coenzyme A oxidase At3g06690</fullName>
        <shortName>Acyl-CoA oxidase</shortName>
        <ecNumber>1.3.3.6</ecNumber>
    </recommendedName>
</protein>
<feature type="chain" id="PRO_0000411108" description="Putative acyl-coenzyme A oxidase At3g06690">
    <location>
        <begin position="1"/>
        <end position="187"/>
    </location>
</feature>
<feature type="region of interest" description="Disordered" evidence="1">
    <location>
        <begin position="1"/>
        <end position="21"/>
    </location>
</feature>
<proteinExistence type="inferred from homology"/>